<organism>
    <name type="scientific">Cereibacter sphaeroides (strain ATCC 17029 / ATH 2.4.9)</name>
    <name type="common">Rhodobacter sphaeroides</name>
    <dbReference type="NCBI Taxonomy" id="349101"/>
    <lineage>
        <taxon>Bacteria</taxon>
        <taxon>Pseudomonadati</taxon>
        <taxon>Pseudomonadota</taxon>
        <taxon>Alphaproteobacteria</taxon>
        <taxon>Rhodobacterales</taxon>
        <taxon>Paracoccaceae</taxon>
        <taxon>Cereibacter</taxon>
    </lineage>
</organism>
<feature type="chain" id="PRO_0000291149" description="UPF0434 protein Rsph17029_0141">
    <location>
        <begin position="1"/>
        <end position="59"/>
    </location>
</feature>
<proteinExistence type="inferred from homology"/>
<sequence>MIGNTLFDRRMLEALVCPVTQAGLAYDADRQELISKQARLAFPIRDGIPIMLVSEAREL</sequence>
<accession>A3PFZ5</accession>
<gene>
    <name type="ordered locus">Rsph17029_0141</name>
</gene>
<dbReference type="EMBL" id="CP000577">
    <property type="protein sequence ID" value="ABN75261.1"/>
    <property type="molecule type" value="Genomic_DNA"/>
</dbReference>
<dbReference type="RefSeq" id="WP_011840199.1">
    <property type="nucleotide sequence ID" value="NC_009049.1"/>
</dbReference>
<dbReference type="SMR" id="A3PFZ5"/>
<dbReference type="KEGG" id="rsh:Rsph17029_0141"/>
<dbReference type="HOGENOM" id="CLU_155659_3_1_5"/>
<dbReference type="GO" id="GO:0005829">
    <property type="term" value="C:cytosol"/>
    <property type="evidence" value="ECO:0007669"/>
    <property type="project" value="TreeGrafter"/>
</dbReference>
<dbReference type="FunFam" id="2.20.25.10:FF:000002">
    <property type="entry name" value="UPF0434 protein YcaR"/>
    <property type="match status" value="1"/>
</dbReference>
<dbReference type="Gene3D" id="2.20.25.10">
    <property type="match status" value="1"/>
</dbReference>
<dbReference type="HAMAP" id="MF_01187">
    <property type="entry name" value="UPF0434"/>
    <property type="match status" value="1"/>
</dbReference>
<dbReference type="InterPro" id="IPR005651">
    <property type="entry name" value="Trm112-like"/>
</dbReference>
<dbReference type="PANTHER" id="PTHR33505:SF4">
    <property type="entry name" value="PROTEIN PREY, MITOCHONDRIAL"/>
    <property type="match status" value="1"/>
</dbReference>
<dbReference type="PANTHER" id="PTHR33505">
    <property type="entry name" value="ZGC:162634"/>
    <property type="match status" value="1"/>
</dbReference>
<dbReference type="Pfam" id="PF03966">
    <property type="entry name" value="Trm112p"/>
    <property type="match status" value="1"/>
</dbReference>
<dbReference type="SUPFAM" id="SSF158997">
    <property type="entry name" value="Trm112p-like"/>
    <property type="match status" value="1"/>
</dbReference>
<evidence type="ECO:0000255" key="1">
    <source>
        <dbReference type="HAMAP-Rule" id="MF_01187"/>
    </source>
</evidence>
<name>Y141_CERS1</name>
<reference key="1">
    <citation type="submission" date="2007-02" db="EMBL/GenBank/DDBJ databases">
        <title>Complete sequence of chromosome 1 of Rhodobacter sphaeroides ATCC 17029.</title>
        <authorList>
            <person name="Copeland A."/>
            <person name="Lucas S."/>
            <person name="Lapidus A."/>
            <person name="Barry K."/>
            <person name="Detter J.C."/>
            <person name="Glavina del Rio T."/>
            <person name="Hammon N."/>
            <person name="Israni S."/>
            <person name="Dalin E."/>
            <person name="Tice H."/>
            <person name="Pitluck S."/>
            <person name="Kiss H."/>
            <person name="Brettin T."/>
            <person name="Bruce D."/>
            <person name="Han C."/>
            <person name="Tapia R."/>
            <person name="Gilna P."/>
            <person name="Schmutz J."/>
            <person name="Larimer F."/>
            <person name="Land M."/>
            <person name="Hauser L."/>
            <person name="Kyrpides N."/>
            <person name="Mikhailova N."/>
            <person name="Richardson P."/>
            <person name="Mackenzie C."/>
            <person name="Choudhary M."/>
            <person name="Donohue T.J."/>
            <person name="Kaplan S."/>
        </authorList>
    </citation>
    <scope>NUCLEOTIDE SEQUENCE [LARGE SCALE GENOMIC DNA]</scope>
    <source>
        <strain>ATCC 17029 / ATH 2.4.9</strain>
    </source>
</reference>
<protein>
    <recommendedName>
        <fullName evidence="1">UPF0434 protein Rsph17029_0141</fullName>
    </recommendedName>
</protein>
<comment type="similarity">
    <text evidence="1">Belongs to the UPF0434 family.</text>
</comment>